<proteinExistence type="inferred from homology"/>
<gene>
    <name evidence="1" type="primary">lplA</name>
    <name type="ordered locus">ECP_4770</name>
</gene>
<sequence>MSTLRLLISDSYDPWFNLAVEECIFRQMPATQRVLFLWRNADTVVIGRAQNPWKECNTRRMEEDNVRLARRSSGGGAVFHDLGNTCFTFMAGKPEYDKTISTSIVLNALNALGVSAEASGRNDLVVKTAEGDRKVSGSAYRETKDRGFHHGTLLLNSDLSRLANYLNPDKKKLAAKGITSVRSRVTNLTELLPGITHEQVCEAITEAFFAHYGERVEAEIISPDKTPDLPNFAETFARQSSWEWNFGQAPAFSHLLDERFTWGGVELHFDVEKGHITRAQVFTDSLNPAPLEALAGRLQGCLYRADMLQQECEALLVDFPEQEKELRELSAWMAGAVR</sequence>
<evidence type="ECO:0000255" key="1">
    <source>
        <dbReference type="HAMAP-Rule" id="MF_01602"/>
    </source>
</evidence>
<evidence type="ECO:0000255" key="2">
    <source>
        <dbReference type="PROSITE-ProRule" id="PRU01067"/>
    </source>
</evidence>
<name>LPLA_ECOL5</name>
<keyword id="KW-0067">ATP-binding</keyword>
<keyword id="KW-0963">Cytoplasm</keyword>
<keyword id="KW-0436">Ligase</keyword>
<keyword id="KW-0547">Nucleotide-binding</keyword>
<accession>Q0T8S7</accession>
<dbReference type="EC" id="6.3.1.20" evidence="1"/>
<dbReference type="EMBL" id="CP000247">
    <property type="protein sequence ID" value="ABG72652.1"/>
    <property type="molecule type" value="Genomic_DNA"/>
</dbReference>
<dbReference type="RefSeq" id="WP_000105872.1">
    <property type="nucleotide sequence ID" value="NC_008253.1"/>
</dbReference>
<dbReference type="SMR" id="Q0T8S7"/>
<dbReference type="KEGG" id="ecp:ECP_4770"/>
<dbReference type="HOGENOM" id="CLU_022986_0_1_6"/>
<dbReference type="UniPathway" id="UPA00537">
    <property type="reaction ID" value="UER00594"/>
</dbReference>
<dbReference type="UniPathway" id="UPA00537">
    <property type="reaction ID" value="UER00595"/>
</dbReference>
<dbReference type="Proteomes" id="UP000009182">
    <property type="component" value="Chromosome"/>
</dbReference>
<dbReference type="GO" id="GO:0005829">
    <property type="term" value="C:cytosol"/>
    <property type="evidence" value="ECO:0007669"/>
    <property type="project" value="TreeGrafter"/>
</dbReference>
<dbReference type="GO" id="GO:0005524">
    <property type="term" value="F:ATP binding"/>
    <property type="evidence" value="ECO:0007669"/>
    <property type="project" value="UniProtKB-KW"/>
</dbReference>
<dbReference type="GO" id="GO:0016979">
    <property type="term" value="F:lipoate-protein ligase activity"/>
    <property type="evidence" value="ECO:0007669"/>
    <property type="project" value="UniProtKB-UniRule"/>
</dbReference>
<dbReference type="GO" id="GO:0017118">
    <property type="term" value="F:lipoyltransferase activity"/>
    <property type="evidence" value="ECO:0007669"/>
    <property type="project" value="TreeGrafter"/>
</dbReference>
<dbReference type="GO" id="GO:0036211">
    <property type="term" value="P:protein modification process"/>
    <property type="evidence" value="ECO:0007669"/>
    <property type="project" value="InterPro"/>
</dbReference>
<dbReference type="CDD" id="cd16435">
    <property type="entry name" value="BPL_LplA_LipB"/>
    <property type="match status" value="1"/>
</dbReference>
<dbReference type="FunFam" id="3.30.390.50:FF:000002">
    <property type="entry name" value="Lipoate-protein ligase A"/>
    <property type="match status" value="1"/>
</dbReference>
<dbReference type="FunFam" id="3.30.930.10:FF:000024">
    <property type="entry name" value="Lipoate-protein ligase A"/>
    <property type="match status" value="1"/>
</dbReference>
<dbReference type="Gene3D" id="3.30.930.10">
    <property type="entry name" value="Bira Bifunctional Protein, Domain 2"/>
    <property type="match status" value="1"/>
</dbReference>
<dbReference type="Gene3D" id="3.30.390.50">
    <property type="entry name" value="CO dehydrogenase flavoprotein, C-terminal domain"/>
    <property type="match status" value="1"/>
</dbReference>
<dbReference type="HAMAP" id="MF_01602">
    <property type="entry name" value="LplA"/>
    <property type="match status" value="1"/>
</dbReference>
<dbReference type="InterPro" id="IPR045864">
    <property type="entry name" value="aa-tRNA-synth_II/BPL/LPL"/>
</dbReference>
<dbReference type="InterPro" id="IPR004143">
    <property type="entry name" value="BPL_LPL_catalytic"/>
</dbReference>
<dbReference type="InterPro" id="IPR023741">
    <property type="entry name" value="Lipoate_ligase_A"/>
</dbReference>
<dbReference type="InterPro" id="IPR019491">
    <property type="entry name" value="Lipoate_protein_ligase_C"/>
</dbReference>
<dbReference type="InterPro" id="IPR004562">
    <property type="entry name" value="LipoylTrfase_LipoateP_Ligase"/>
</dbReference>
<dbReference type="NCBIfam" id="TIGR00545">
    <property type="entry name" value="lipoyltrans"/>
    <property type="match status" value="1"/>
</dbReference>
<dbReference type="PANTHER" id="PTHR12561">
    <property type="entry name" value="LIPOATE-PROTEIN LIGASE"/>
    <property type="match status" value="1"/>
</dbReference>
<dbReference type="PANTHER" id="PTHR12561:SF3">
    <property type="entry name" value="LIPOYLTRANSFERASE 1, MITOCHONDRIAL"/>
    <property type="match status" value="1"/>
</dbReference>
<dbReference type="Pfam" id="PF10437">
    <property type="entry name" value="Lip_prot_lig_C"/>
    <property type="match status" value="1"/>
</dbReference>
<dbReference type="Pfam" id="PF21948">
    <property type="entry name" value="LplA-B_cat"/>
    <property type="match status" value="1"/>
</dbReference>
<dbReference type="SUPFAM" id="SSF55681">
    <property type="entry name" value="Class II aaRS and biotin synthetases"/>
    <property type="match status" value="1"/>
</dbReference>
<dbReference type="SUPFAM" id="SSF82649">
    <property type="entry name" value="SufE/NifU"/>
    <property type="match status" value="1"/>
</dbReference>
<dbReference type="PROSITE" id="PS51733">
    <property type="entry name" value="BPL_LPL_CATALYTIC"/>
    <property type="match status" value="1"/>
</dbReference>
<reference key="1">
    <citation type="journal article" date="2006" name="Mol. Microbiol.">
        <title>Role of pathogenicity island-associated integrases in the genome plasticity of uropathogenic Escherichia coli strain 536.</title>
        <authorList>
            <person name="Hochhut B."/>
            <person name="Wilde C."/>
            <person name="Balling G."/>
            <person name="Middendorf B."/>
            <person name="Dobrindt U."/>
            <person name="Brzuszkiewicz E."/>
            <person name="Gottschalk G."/>
            <person name="Carniel E."/>
            <person name="Hacker J."/>
        </authorList>
    </citation>
    <scope>NUCLEOTIDE SEQUENCE [LARGE SCALE GENOMIC DNA]</scope>
    <source>
        <strain>536 / UPEC</strain>
    </source>
</reference>
<protein>
    <recommendedName>
        <fullName evidence="1">Lipoate-protein ligase A</fullName>
        <ecNumber evidence="1">6.3.1.20</ecNumber>
    </recommendedName>
    <alternativeName>
        <fullName evidence="1">Lipoate--protein ligase</fullName>
    </alternativeName>
</protein>
<feature type="chain" id="PRO_1000069380" description="Lipoate-protein ligase A">
    <location>
        <begin position="1"/>
        <end position="338"/>
    </location>
</feature>
<feature type="domain" description="BPL/LPL catalytic" evidence="2">
    <location>
        <begin position="29"/>
        <end position="216"/>
    </location>
</feature>
<feature type="binding site" evidence="1">
    <location>
        <position position="71"/>
    </location>
    <ligand>
        <name>ATP</name>
        <dbReference type="ChEBI" id="CHEBI:30616"/>
    </ligand>
</feature>
<feature type="binding site" evidence="1">
    <location>
        <begin position="76"/>
        <end position="79"/>
    </location>
    <ligand>
        <name>ATP</name>
        <dbReference type="ChEBI" id="CHEBI:30616"/>
    </ligand>
</feature>
<feature type="binding site" evidence="1">
    <location>
        <position position="134"/>
    </location>
    <ligand>
        <name>(R)-lipoate</name>
        <dbReference type="ChEBI" id="CHEBI:83088"/>
    </ligand>
</feature>
<feature type="binding site" evidence="1">
    <location>
        <position position="134"/>
    </location>
    <ligand>
        <name>ATP</name>
        <dbReference type="ChEBI" id="CHEBI:30616"/>
    </ligand>
</feature>
<comment type="function">
    <text evidence="1">Catalyzes both the ATP-dependent activation of exogenously supplied lipoate to lipoyl-AMP and the transfer of the activated lipoyl onto the lipoyl domains of lipoate-dependent enzymes.</text>
</comment>
<comment type="catalytic activity">
    <reaction evidence="1">
        <text>L-lysyl-[lipoyl-carrier protein] + (R)-lipoate + ATP = N(6)-[(R)-lipoyl]-L-lysyl-[lipoyl-carrier protein] + AMP + diphosphate + H(+)</text>
        <dbReference type="Rhea" id="RHEA:49288"/>
        <dbReference type="Rhea" id="RHEA-COMP:10500"/>
        <dbReference type="Rhea" id="RHEA-COMP:10502"/>
        <dbReference type="ChEBI" id="CHEBI:15378"/>
        <dbReference type="ChEBI" id="CHEBI:29969"/>
        <dbReference type="ChEBI" id="CHEBI:30616"/>
        <dbReference type="ChEBI" id="CHEBI:33019"/>
        <dbReference type="ChEBI" id="CHEBI:83088"/>
        <dbReference type="ChEBI" id="CHEBI:83099"/>
        <dbReference type="ChEBI" id="CHEBI:456215"/>
        <dbReference type="EC" id="6.3.1.20"/>
    </reaction>
</comment>
<comment type="pathway">
    <text evidence="1">Protein modification; protein lipoylation via exogenous pathway; protein N(6)-(lipoyl)lysine from lipoate: step 1/2.</text>
</comment>
<comment type="pathway">
    <text evidence="1">Protein modification; protein lipoylation via exogenous pathway; protein N(6)-(lipoyl)lysine from lipoate: step 2/2.</text>
</comment>
<comment type="subunit">
    <text evidence="1">Monomer.</text>
</comment>
<comment type="subcellular location">
    <subcellularLocation>
        <location evidence="1">Cytoplasm</location>
    </subcellularLocation>
</comment>
<comment type="miscellaneous">
    <text evidence="1">In the transfer reaction, the free carboxyl group of lipoic acid is attached via an amide linkage to the epsilon-amino group of a specific lysine residue of lipoyl domains of lipoate-dependent enzymes.</text>
</comment>
<comment type="similarity">
    <text evidence="1">Belongs to the LplA family.</text>
</comment>
<organism>
    <name type="scientific">Escherichia coli O6:K15:H31 (strain 536 / UPEC)</name>
    <dbReference type="NCBI Taxonomy" id="362663"/>
    <lineage>
        <taxon>Bacteria</taxon>
        <taxon>Pseudomonadati</taxon>
        <taxon>Pseudomonadota</taxon>
        <taxon>Gammaproteobacteria</taxon>
        <taxon>Enterobacterales</taxon>
        <taxon>Enterobacteriaceae</taxon>
        <taxon>Escherichia</taxon>
    </lineage>
</organism>